<reference key="1">
    <citation type="journal article" date="2011" name="MBio">
        <title>Novel metabolic attributes of the genus Cyanothece, comprising a group of unicellular nitrogen-fixing Cyanobacteria.</title>
        <authorList>
            <person name="Bandyopadhyay A."/>
            <person name="Elvitigala T."/>
            <person name="Welsh E."/>
            <person name="Stockel J."/>
            <person name="Liberton M."/>
            <person name="Min H."/>
            <person name="Sherman L.A."/>
            <person name="Pakrasi H.B."/>
        </authorList>
    </citation>
    <scope>NUCLEOTIDE SEQUENCE [LARGE SCALE GENOMIC DNA]</scope>
    <source>
        <strain>PCC 8801 / RF-1</strain>
    </source>
</reference>
<protein>
    <recommendedName>
        <fullName>Putative 8-amino-7-oxononanoate synthase</fullName>
        <shortName>AONS</shortName>
        <ecNumber>2.3.1.47</ecNumber>
    </recommendedName>
    <alternativeName>
        <fullName>7-keto-8-amino-pelargonic acid synthase</fullName>
        <shortName>7-KAP synthase</shortName>
    </alternativeName>
    <alternativeName>
        <fullName>8-amino-7-ketopelargonate synthase</fullName>
    </alternativeName>
</protein>
<proteinExistence type="inferred from homology"/>
<sequence length="381" mass="41854">MSYQWLEKALKTIHQANWYRSVTAITSLPGSTIEIDGNTFINFASNDYLGLAGDPRLIKAAVEATQQFGTGSTGSRLLSGHRELHQELETAIASLKQTEEALVFSSGYLANLGTITAIVGTRDLILGDQYNHSSLKNGSKLSSATVLEYDHCNSEDLQEKLQQHRHQYRRCLIITDSIFSMDGNACPLQKLLSLAADFDCMLLVDEAHATGVIGETGAGLVEHFGCSNQPLIMTGTLSKALGSLGGYVAGSRMLIDFLRNRAPTWIYTTGLSPADTSAALEAIKIMQNEPQRRKKLWDNVNYLKEKLCDFNLFTSDSPILCLGIETVEKALTLASQLKEKGIFVPAIRPPTVPTSRLRFSVMATHEETQLQQLVTTLNQLI</sequence>
<evidence type="ECO:0000250" key="1"/>
<evidence type="ECO:0000305" key="2"/>
<organism>
    <name type="scientific">Rippkaea orientalis (strain PCC 8801 / RF-1)</name>
    <name type="common">Cyanothece sp. (strain PCC 8801)</name>
    <dbReference type="NCBI Taxonomy" id="41431"/>
    <lineage>
        <taxon>Bacteria</taxon>
        <taxon>Bacillati</taxon>
        <taxon>Cyanobacteriota</taxon>
        <taxon>Cyanophyceae</taxon>
        <taxon>Oscillatoriophycideae</taxon>
        <taxon>Chroococcales</taxon>
        <taxon>Aphanothecaceae</taxon>
        <taxon>Rippkaea</taxon>
        <taxon>Rippkaea orientalis</taxon>
    </lineage>
</organism>
<gene>
    <name type="primary">bioF</name>
    <name type="ordered locus">PCC8801_0067</name>
</gene>
<dbReference type="EC" id="2.3.1.47"/>
<dbReference type="EMBL" id="CP001287">
    <property type="protein sequence ID" value="ACK64173.1"/>
    <property type="molecule type" value="Genomic_DNA"/>
</dbReference>
<dbReference type="RefSeq" id="WP_012593450.1">
    <property type="nucleotide sequence ID" value="NC_011726.1"/>
</dbReference>
<dbReference type="SMR" id="B7K0L9"/>
<dbReference type="STRING" id="41431.PCC8801_0067"/>
<dbReference type="KEGG" id="cyp:PCC8801_0067"/>
<dbReference type="eggNOG" id="COG0156">
    <property type="taxonomic scope" value="Bacteria"/>
</dbReference>
<dbReference type="HOGENOM" id="CLU_015846_11_0_3"/>
<dbReference type="OrthoDB" id="9807157at2"/>
<dbReference type="UniPathway" id="UPA00078"/>
<dbReference type="Proteomes" id="UP000008204">
    <property type="component" value="Chromosome"/>
</dbReference>
<dbReference type="GO" id="GO:0008710">
    <property type="term" value="F:8-amino-7-oxononanoate synthase activity"/>
    <property type="evidence" value="ECO:0007669"/>
    <property type="project" value="UniProtKB-EC"/>
</dbReference>
<dbReference type="GO" id="GO:0030170">
    <property type="term" value="F:pyridoxal phosphate binding"/>
    <property type="evidence" value="ECO:0007669"/>
    <property type="project" value="InterPro"/>
</dbReference>
<dbReference type="GO" id="GO:0009102">
    <property type="term" value="P:biotin biosynthetic process"/>
    <property type="evidence" value="ECO:0007669"/>
    <property type="project" value="UniProtKB-UniPathway"/>
</dbReference>
<dbReference type="CDD" id="cd06454">
    <property type="entry name" value="KBL_like"/>
    <property type="match status" value="1"/>
</dbReference>
<dbReference type="Gene3D" id="3.90.1150.10">
    <property type="entry name" value="Aspartate Aminotransferase, domain 1"/>
    <property type="match status" value="1"/>
</dbReference>
<dbReference type="Gene3D" id="3.40.640.10">
    <property type="entry name" value="Type I PLP-dependent aspartate aminotransferase-like (Major domain)"/>
    <property type="match status" value="1"/>
</dbReference>
<dbReference type="InterPro" id="IPR001917">
    <property type="entry name" value="Aminotrans_II_pyridoxalP_BS"/>
</dbReference>
<dbReference type="InterPro" id="IPR004839">
    <property type="entry name" value="Aminotransferase_I/II_large"/>
</dbReference>
<dbReference type="InterPro" id="IPR050087">
    <property type="entry name" value="AON_synthase_class-II"/>
</dbReference>
<dbReference type="InterPro" id="IPR004723">
    <property type="entry name" value="AONS_Archaea/Proteobacteria"/>
</dbReference>
<dbReference type="InterPro" id="IPR015424">
    <property type="entry name" value="PyrdxlP-dep_Trfase"/>
</dbReference>
<dbReference type="InterPro" id="IPR015421">
    <property type="entry name" value="PyrdxlP-dep_Trfase_major"/>
</dbReference>
<dbReference type="InterPro" id="IPR015422">
    <property type="entry name" value="PyrdxlP-dep_Trfase_small"/>
</dbReference>
<dbReference type="NCBIfam" id="TIGR00858">
    <property type="entry name" value="bioF"/>
    <property type="match status" value="1"/>
</dbReference>
<dbReference type="PANTHER" id="PTHR13693:SF100">
    <property type="entry name" value="8-AMINO-7-OXONONANOATE SYNTHASE"/>
    <property type="match status" value="1"/>
</dbReference>
<dbReference type="PANTHER" id="PTHR13693">
    <property type="entry name" value="CLASS II AMINOTRANSFERASE/8-AMINO-7-OXONONANOATE SYNTHASE"/>
    <property type="match status" value="1"/>
</dbReference>
<dbReference type="Pfam" id="PF00155">
    <property type="entry name" value="Aminotran_1_2"/>
    <property type="match status" value="1"/>
</dbReference>
<dbReference type="SUPFAM" id="SSF53383">
    <property type="entry name" value="PLP-dependent transferases"/>
    <property type="match status" value="1"/>
</dbReference>
<dbReference type="PROSITE" id="PS00599">
    <property type="entry name" value="AA_TRANSFER_CLASS_2"/>
    <property type="match status" value="1"/>
</dbReference>
<feature type="chain" id="PRO_0000380961" description="Putative 8-amino-7-oxononanoate synthase">
    <location>
        <begin position="1"/>
        <end position="381"/>
    </location>
</feature>
<feature type="binding site" evidence="1">
    <location>
        <position position="20"/>
    </location>
    <ligand>
        <name>substrate</name>
    </ligand>
</feature>
<feature type="binding site" evidence="1">
    <location>
        <begin position="107"/>
        <end position="108"/>
    </location>
    <ligand>
        <name>pyridoxal 5'-phosphate</name>
        <dbReference type="ChEBI" id="CHEBI:597326"/>
    </ligand>
</feature>
<feature type="binding site" evidence="1">
    <location>
        <position position="132"/>
    </location>
    <ligand>
        <name>substrate</name>
    </ligand>
</feature>
<feature type="binding site" evidence="1">
    <location>
        <position position="180"/>
    </location>
    <ligand>
        <name>pyridoxal 5'-phosphate</name>
        <dbReference type="ChEBI" id="CHEBI:597326"/>
    </ligand>
</feature>
<feature type="binding site" evidence="1">
    <location>
        <begin position="205"/>
        <end position="208"/>
    </location>
    <ligand>
        <name>pyridoxal 5'-phosphate</name>
        <dbReference type="ChEBI" id="CHEBI:597326"/>
    </ligand>
</feature>
<feature type="binding site" evidence="1">
    <location>
        <begin position="236"/>
        <end position="239"/>
    </location>
    <ligand>
        <name>pyridoxal 5'-phosphate</name>
        <dbReference type="ChEBI" id="CHEBI:597326"/>
    </ligand>
</feature>
<feature type="binding site" evidence="1">
    <location>
        <position position="351"/>
    </location>
    <ligand>
        <name>substrate</name>
    </ligand>
</feature>
<feature type="modified residue" description="N6-(pyridoxal phosphate)lysine" evidence="1">
    <location>
        <position position="239"/>
    </location>
</feature>
<comment type="function">
    <text evidence="1">Catalyzes the decarboxylative condensation of pimeloyl-[acyl-carrier protein] and L-alanine to produce 8-amino-7-oxononanoate (AON), [acyl-carrier protein], and carbon dioxide.</text>
</comment>
<comment type="catalytic activity">
    <reaction>
        <text>6-carboxyhexanoyl-[ACP] + L-alanine + H(+) = (8S)-8-amino-7-oxononanoate + holo-[ACP] + CO2</text>
        <dbReference type="Rhea" id="RHEA:42288"/>
        <dbReference type="Rhea" id="RHEA-COMP:9685"/>
        <dbReference type="Rhea" id="RHEA-COMP:9955"/>
        <dbReference type="ChEBI" id="CHEBI:15378"/>
        <dbReference type="ChEBI" id="CHEBI:16526"/>
        <dbReference type="ChEBI" id="CHEBI:57972"/>
        <dbReference type="ChEBI" id="CHEBI:64479"/>
        <dbReference type="ChEBI" id="CHEBI:78846"/>
        <dbReference type="ChEBI" id="CHEBI:149468"/>
        <dbReference type="EC" id="2.3.1.47"/>
    </reaction>
</comment>
<comment type="cofactor">
    <cofactor evidence="1">
        <name>pyridoxal 5'-phosphate</name>
        <dbReference type="ChEBI" id="CHEBI:597326"/>
    </cofactor>
</comment>
<comment type="pathway">
    <text>Cofactor biosynthesis; biotin biosynthesis.</text>
</comment>
<comment type="subunit">
    <text evidence="1">Homodimer.</text>
</comment>
<comment type="similarity">
    <text evidence="2">Belongs to the class-II pyridoxal-phosphate-dependent aminotransferase family. BioF subfamily.</text>
</comment>
<accession>B7K0L9</accession>
<keyword id="KW-0093">Biotin biosynthesis</keyword>
<keyword id="KW-0663">Pyridoxal phosphate</keyword>
<keyword id="KW-1185">Reference proteome</keyword>
<keyword id="KW-0808">Transferase</keyword>
<name>BIOF_RIPO1</name>